<sequence>MAVTGIVAEFNPFHYGHKYLLEQAEGLKIVAMSGNFVQRGEPAIVDKWTRAQMALENGADIVVELPFQVAVQSADYFAQGAVDILSTMGADTLAFGTEEDLDYSEIARIYEEKAEQMTAFLETLDDSLSYPQKTQKMWESFTGIDFSGNTPNHILALAYAKASAGKNLRLQPIKRQGAAYHSQEKNQMMASATAIRKHISDRTFVLQSTPSSELLLMAPQVNWENYFDLVRYHILSQEQLDHVFQVNQEIANRLKSAIVHVHSIEELVDKVSTKRYTKARVRRILTYILVNARENNLPNGVHVLGFTEKGQEHLKKMKKSISIVSRIGAVPWDQQTQTADRIYQLGHSDIKEQNFGRSPIRIEKLG</sequence>
<evidence type="ECO:0000255" key="1">
    <source>
        <dbReference type="HAMAP-Rule" id="MF_01539"/>
    </source>
</evidence>
<proteinExistence type="inferred from homology"/>
<keyword id="KW-0067">ATP-binding</keyword>
<keyword id="KW-0963">Cytoplasm</keyword>
<keyword id="KW-0436">Ligase</keyword>
<keyword id="KW-0547">Nucleotide-binding</keyword>
<keyword id="KW-1185">Reference proteome</keyword>
<keyword id="KW-0694">RNA-binding</keyword>
<keyword id="KW-0819">tRNA processing</keyword>
<keyword id="KW-0820">tRNA-binding</keyword>
<protein>
    <recommendedName>
        <fullName evidence="1">tRNA(Met) cytidine acetate ligase</fullName>
        <ecNumber evidence="1">6.3.4.-</ecNumber>
    </recommendedName>
</protein>
<comment type="function">
    <text evidence="1">Catalyzes the formation of N(4)-acetylcytidine (ac(4)C) at the wobble position of elongator tRNA(Met), using acetate and ATP as substrates. First activates an acetate ion to form acetyladenylate (Ac-AMP) and then transfers the acetyl group to tRNA to form ac(4)C34.</text>
</comment>
<comment type="catalytic activity">
    <reaction evidence="1">
        <text>cytidine(34) in elongator tRNA(Met) + acetate + ATP = N(4)-acetylcytidine(34) in elongator tRNA(Met) + AMP + diphosphate</text>
        <dbReference type="Rhea" id="RHEA:58144"/>
        <dbReference type="Rhea" id="RHEA-COMP:10693"/>
        <dbReference type="Rhea" id="RHEA-COMP:10694"/>
        <dbReference type="ChEBI" id="CHEBI:30089"/>
        <dbReference type="ChEBI" id="CHEBI:30616"/>
        <dbReference type="ChEBI" id="CHEBI:33019"/>
        <dbReference type="ChEBI" id="CHEBI:74900"/>
        <dbReference type="ChEBI" id="CHEBI:82748"/>
        <dbReference type="ChEBI" id="CHEBI:456215"/>
    </reaction>
</comment>
<comment type="subcellular location">
    <subcellularLocation>
        <location evidence="1">Cytoplasm</location>
    </subcellularLocation>
</comment>
<comment type="similarity">
    <text evidence="1">Belongs to the TmcAL family.</text>
</comment>
<organism>
    <name type="scientific">Streptococcus uberis (strain ATCC BAA-854 / 0140J)</name>
    <dbReference type="NCBI Taxonomy" id="218495"/>
    <lineage>
        <taxon>Bacteria</taxon>
        <taxon>Bacillati</taxon>
        <taxon>Bacillota</taxon>
        <taxon>Bacilli</taxon>
        <taxon>Lactobacillales</taxon>
        <taxon>Streptococcaceae</taxon>
        <taxon>Streptococcus</taxon>
    </lineage>
</organism>
<dbReference type="EC" id="6.3.4.-" evidence="1"/>
<dbReference type="EMBL" id="AM946015">
    <property type="protein sequence ID" value="CAR40957.1"/>
    <property type="molecule type" value="Genomic_DNA"/>
</dbReference>
<dbReference type="RefSeq" id="WP_012657897.1">
    <property type="nucleotide sequence ID" value="NC_012004.1"/>
</dbReference>
<dbReference type="SMR" id="B9DTN0"/>
<dbReference type="STRING" id="218495.SUB0360"/>
<dbReference type="KEGG" id="sub:SUB0360"/>
<dbReference type="eggNOG" id="COG1323">
    <property type="taxonomic scope" value="Bacteria"/>
</dbReference>
<dbReference type="HOGENOM" id="CLU_038915_0_2_9"/>
<dbReference type="OrthoDB" id="9769796at2"/>
<dbReference type="Proteomes" id="UP000000449">
    <property type="component" value="Chromosome"/>
</dbReference>
<dbReference type="GO" id="GO:0005737">
    <property type="term" value="C:cytoplasm"/>
    <property type="evidence" value="ECO:0007669"/>
    <property type="project" value="UniProtKB-SubCell"/>
</dbReference>
<dbReference type="GO" id="GO:0005524">
    <property type="term" value="F:ATP binding"/>
    <property type="evidence" value="ECO:0007669"/>
    <property type="project" value="UniProtKB-KW"/>
</dbReference>
<dbReference type="GO" id="GO:0016879">
    <property type="term" value="F:ligase activity, forming carbon-nitrogen bonds"/>
    <property type="evidence" value="ECO:0007669"/>
    <property type="project" value="UniProtKB-UniRule"/>
</dbReference>
<dbReference type="GO" id="GO:0000049">
    <property type="term" value="F:tRNA binding"/>
    <property type="evidence" value="ECO:0007669"/>
    <property type="project" value="UniProtKB-KW"/>
</dbReference>
<dbReference type="GO" id="GO:0006400">
    <property type="term" value="P:tRNA modification"/>
    <property type="evidence" value="ECO:0007669"/>
    <property type="project" value="UniProtKB-UniRule"/>
</dbReference>
<dbReference type="Gene3D" id="3.40.50.620">
    <property type="entry name" value="HUPs"/>
    <property type="match status" value="1"/>
</dbReference>
<dbReference type="HAMAP" id="MF_01539">
    <property type="entry name" value="TmcAL"/>
    <property type="match status" value="1"/>
</dbReference>
<dbReference type="InterPro" id="IPR014729">
    <property type="entry name" value="Rossmann-like_a/b/a_fold"/>
</dbReference>
<dbReference type="InterPro" id="IPR008513">
    <property type="entry name" value="tRNA(Met)_cyd_acetate_ligase"/>
</dbReference>
<dbReference type="NCBIfam" id="NF010191">
    <property type="entry name" value="PRK13670.1"/>
    <property type="match status" value="1"/>
</dbReference>
<dbReference type="PANTHER" id="PTHR37825">
    <property type="entry name" value="TRNA(MET) CYTIDINE ACETATE LIGASE"/>
    <property type="match status" value="1"/>
</dbReference>
<dbReference type="PANTHER" id="PTHR37825:SF1">
    <property type="entry name" value="TRNA(MET) CYTIDINE ACETATE LIGASE"/>
    <property type="match status" value="1"/>
</dbReference>
<dbReference type="Pfam" id="PF05636">
    <property type="entry name" value="HIGH_NTase1"/>
    <property type="match status" value="1"/>
</dbReference>
<dbReference type="SUPFAM" id="SSF52374">
    <property type="entry name" value="Nucleotidylyl transferase"/>
    <property type="match status" value="1"/>
</dbReference>
<reference key="1">
    <citation type="journal article" date="2009" name="BMC Genomics">
        <title>Evidence for niche adaptation in the genome of the bovine pathogen Streptococcus uberis.</title>
        <authorList>
            <person name="Ward P.N."/>
            <person name="Holden M.T.G."/>
            <person name="Leigh J.A."/>
            <person name="Lennard N."/>
            <person name="Bignell A."/>
            <person name="Barron A."/>
            <person name="Clark L."/>
            <person name="Quail M.A."/>
            <person name="Woodward J."/>
            <person name="Barrell B.G."/>
            <person name="Egan S.A."/>
            <person name="Field T.R."/>
            <person name="Maskell D."/>
            <person name="Kehoe M."/>
            <person name="Dowson C.G."/>
            <person name="Chanter N."/>
            <person name="Whatmore A.M."/>
            <person name="Bentley S.D."/>
            <person name="Parkhill J."/>
        </authorList>
    </citation>
    <scope>NUCLEOTIDE SEQUENCE [LARGE SCALE GENOMIC DNA]</scope>
    <source>
        <strain>ATCC BAA-854 / 0140J</strain>
    </source>
</reference>
<name>TMCAL_STRU0</name>
<accession>B9DTN0</accession>
<gene>
    <name evidence="1" type="primary">tmcAL</name>
    <name type="ordered locus">SUB0360</name>
</gene>
<feature type="chain" id="PRO_1000185224" description="tRNA(Met) cytidine acetate ligase">
    <location>
        <begin position="1"/>
        <end position="366"/>
    </location>
</feature>
<feature type="binding site" evidence="1">
    <location>
        <begin position="7"/>
        <end position="20"/>
    </location>
    <ligand>
        <name>ATP</name>
        <dbReference type="ChEBI" id="CHEBI:30616"/>
    </ligand>
</feature>
<feature type="binding site" evidence="1">
    <location>
        <position position="96"/>
    </location>
    <ligand>
        <name>ATP</name>
        <dbReference type="ChEBI" id="CHEBI:30616"/>
    </ligand>
</feature>
<feature type="binding site" evidence="1">
    <location>
        <position position="152"/>
    </location>
    <ligand>
        <name>ATP</name>
        <dbReference type="ChEBI" id="CHEBI:30616"/>
    </ligand>
</feature>
<feature type="binding site" evidence="1">
    <location>
        <position position="175"/>
    </location>
    <ligand>
        <name>ATP</name>
        <dbReference type="ChEBI" id="CHEBI:30616"/>
    </ligand>
</feature>